<keyword id="KW-0227">DNA damage</keyword>
<keyword id="KW-0233">DNA recombination</keyword>
<keyword id="KW-0234">DNA repair</keyword>
<keyword id="KW-1185">Reference proteome</keyword>
<organism>
    <name type="scientific">Gloeobacter violaceus (strain ATCC 29082 / PCC 7421)</name>
    <dbReference type="NCBI Taxonomy" id="251221"/>
    <lineage>
        <taxon>Bacteria</taxon>
        <taxon>Bacillati</taxon>
        <taxon>Cyanobacteriota</taxon>
        <taxon>Cyanophyceae</taxon>
        <taxon>Gloeobacterales</taxon>
        <taxon>Gloeobacteraceae</taxon>
        <taxon>Gloeobacter</taxon>
    </lineage>
</organism>
<name>RECO_GLOVI</name>
<protein>
    <recommendedName>
        <fullName evidence="1">DNA repair protein RecO</fullName>
    </recommendedName>
    <alternativeName>
        <fullName evidence="1">Recombination protein O</fullName>
    </alternativeName>
</protein>
<reference key="1">
    <citation type="journal article" date="2003" name="DNA Res.">
        <title>Complete genome structure of Gloeobacter violaceus PCC 7421, a cyanobacterium that lacks thylakoids.</title>
        <authorList>
            <person name="Nakamura Y."/>
            <person name="Kaneko T."/>
            <person name="Sato S."/>
            <person name="Mimuro M."/>
            <person name="Miyashita H."/>
            <person name="Tsuchiya T."/>
            <person name="Sasamoto S."/>
            <person name="Watanabe A."/>
            <person name="Kawashima K."/>
            <person name="Kishida Y."/>
            <person name="Kiyokawa C."/>
            <person name="Kohara M."/>
            <person name="Matsumoto M."/>
            <person name="Matsuno A."/>
            <person name="Nakazaki N."/>
            <person name="Shimpo S."/>
            <person name="Takeuchi C."/>
            <person name="Yamada M."/>
            <person name="Tabata S."/>
        </authorList>
    </citation>
    <scope>NUCLEOTIDE SEQUENCE [LARGE SCALE GENOMIC DNA]</scope>
    <source>
        <strain>ATCC 29082 / PCC 7421</strain>
    </source>
</reference>
<accession>Q7NPH1</accession>
<dbReference type="EMBL" id="BA000045">
    <property type="protein sequence ID" value="BAC88025.1"/>
    <property type="molecule type" value="Genomic_DNA"/>
</dbReference>
<dbReference type="RefSeq" id="NP_923030.1">
    <property type="nucleotide sequence ID" value="NC_005125.1"/>
</dbReference>
<dbReference type="RefSeq" id="WP_011140088.1">
    <property type="nucleotide sequence ID" value="NC_005125.1"/>
</dbReference>
<dbReference type="SMR" id="Q7NPH1"/>
<dbReference type="FunCoup" id="Q7NPH1">
    <property type="interactions" value="2"/>
</dbReference>
<dbReference type="STRING" id="251221.gene:10757553"/>
<dbReference type="EnsemblBacteria" id="BAC88025">
    <property type="protein sequence ID" value="BAC88025"/>
    <property type="gene ID" value="BAC88025"/>
</dbReference>
<dbReference type="KEGG" id="gvi:gll0084"/>
<dbReference type="PATRIC" id="fig|251221.4.peg.86"/>
<dbReference type="eggNOG" id="COG1381">
    <property type="taxonomic scope" value="Bacteria"/>
</dbReference>
<dbReference type="HOGENOM" id="CLU_066632_0_0_3"/>
<dbReference type="InParanoid" id="Q7NPH1"/>
<dbReference type="OrthoDB" id="9797083at2"/>
<dbReference type="PhylomeDB" id="Q7NPH1"/>
<dbReference type="Proteomes" id="UP000000557">
    <property type="component" value="Chromosome"/>
</dbReference>
<dbReference type="GO" id="GO:0043590">
    <property type="term" value="C:bacterial nucleoid"/>
    <property type="evidence" value="ECO:0000318"/>
    <property type="project" value="GO_Central"/>
</dbReference>
<dbReference type="GO" id="GO:0006310">
    <property type="term" value="P:DNA recombination"/>
    <property type="evidence" value="ECO:0007669"/>
    <property type="project" value="UniProtKB-UniRule"/>
</dbReference>
<dbReference type="GO" id="GO:0006302">
    <property type="term" value="P:double-strand break repair"/>
    <property type="evidence" value="ECO:0000318"/>
    <property type="project" value="GO_Central"/>
</dbReference>
<dbReference type="Gene3D" id="2.40.50.140">
    <property type="entry name" value="Nucleic acid-binding proteins"/>
    <property type="match status" value="1"/>
</dbReference>
<dbReference type="Gene3D" id="1.20.1440.120">
    <property type="entry name" value="Recombination protein O, C-terminal domain"/>
    <property type="match status" value="1"/>
</dbReference>
<dbReference type="HAMAP" id="MF_00201">
    <property type="entry name" value="RecO"/>
    <property type="match status" value="1"/>
</dbReference>
<dbReference type="InterPro" id="IPR037278">
    <property type="entry name" value="ARFGAP/RecO"/>
</dbReference>
<dbReference type="InterPro" id="IPR022572">
    <property type="entry name" value="DNA_rep/recomb_RecO_N"/>
</dbReference>
<dbReference type="InterPro" id="IPR012340">
    <property type="entry name" value="NA-bd_OB-fold"/>
</dbReference>
<dbReference type="InterPro" id="IPR003717">
    <property type="entry name" value="RecO"/>
</dbReference>
<dbReference type="InterPro" id="IPR042242">
    <property type="entry name" value="RecO_C"/>
</dbReference>
<dbReference type="NCBIfam" id="TIGR00613">
    <property type="entry name" value="reco"/>
    <property type="match status" value="1"/>
</dbReference>
<dbReference type="PANTHER" id="PTHR33991">
    <property type="entry name" value="DNA REPAIR PROTEIN RECO"/>
    <property type="match status" value="1"/>
</dbReference>
<dbReference type="PANTHER" id="PTHR33991:SF1">
    <property type="entry name" value="DNA REPAIR PROTEIN RECO"/>
    <property type="match status" value="1"/>
</dbReference>
<dbReference type="Pfam" id="PF02565">
    <property type="entry name" value="RecO_C"/>
    <property type="match status" value="1"/>
</dbReference>
<dbReference type="Pfam" id="PF11967">
    <property type="entry name" value="RecO_N"/>
    <property type="match status" value="1"/>
</dbReference>
<dbReference type="SUPFAM" id="SSF57863">
    <property type="entry name" value="ArfGap/RecO-like zinc finger"/>
    <property type="match status" value="1"/>
</dbReference>
<dbReference type="SUPFAM" id="SSF50249">
    <property type="entry name" value="Nucleic acid-binding proteins"/>
    <property type="match status" value="1"/>
</dbReference>
<sequence>MSGKTYRATGINLRRMPLGESDLLMTILTRENGLVRAVARGARKANARIGGRTEQFVVNDLQLYRGRSLDQLTQAESLRTFPGLLQDLGRLTAAQYLAEGVLQEATEGQAQEDLYDLLLVHLERLAATPSHQIAARLVHGVYQLLAVGGVAPEVHFCTVSHRPISAESAGFSVEGGGLVALECLSHERVGFRLDIEQVAALQLLADADLTPASLDWNYLWIGLERLLRRHIEFHFDRPLRAATLLEICFEPLAVPAAASPQ</sequence>
<evidence type="ECO:0000255" key="1">
    <source>
        <dbReference type="HAMAP-Rule" id="MF_00201"/>
    </source>
</evidence>
<comment type="function">
    <text evidence="1">Involved in DNA repair and RecF pathway recombination.</text>
</comment>
<comment type="similarity">
    <text evidence="1">Belongs to the RecO family.</text>
</comment>
<feature type="chain" id="PRO_0000204956" description="DNA repair protein RecO">
    <location>
        <begin position="1"/>
        <end position="261"/>
    </location>
</feature>
<gene>
    <name evidence="1" type="primary">recO</name>
    <name type="ordered locus">gll0084</name>
</gene>
<proteinExistence type="inferred from homology"/>